<reference key="1">
    <citation type="journal article" date="2008" name="Cell. Mol. Life Sci.">
        <title>Molecular diversity and evolution of cystine knot toxins of the tarantula Chilobrachys jingzhao.</title>
        <authorList>
            <person name="Chen J."/>
            <person name="Deng M."/>
            <person name="He Q."/>
            <person name="Meng E."/>
            <person name="Jiang L."/>
            <person name="Liao Z."/>
            <person name="Rong M."/>
            <person name="Liang S."/>
        </authorList>
    </citation>
    <scope>NUCLEOTIDE SEQUENCE [LARGE SCALE MRNA]</scope>
    <source>
        <tissue>Venom gland</tissue>
    </source>
</reference>
<reference key="2">
    <citation type="journal article" date="2007" name="Proteomics">
        <title>Proteomic and peptidomic analysis of the venom from Chinese tarantula Chilobrachys jingzhao.</title>
        <authorList>
            <person name="Liao Z."/>
            <person name="Cao J."/>
            <person name="Li S."/>
            <person name="Yan X."/>
            <person name="Hu W."/>
            <person name="He Q."/>
            <person name="Chen J."/>
            <person name="Tang J."/>
            <person name="Xie J."/>
            <person name="Liang S."/>
        </authorList>
    </citation>
    <scope>PROTEIN SEQUENCE OF 44-55</scope>
    <scope>IDENTIFICATION BY MASS SPECTROMETRY</scope>
    <source>
        <tissue>Venom</tissue>
    </source>
</reference>
<accession>B1P1I6</accession>
<comment type="function">
    <text>Probable ion channel inhibitor.</text>
</comment>
<comment type="subcellular location">
    <subcellularLocation>
        <location>Secreted</location>
    </subcellularLocation>
</comment>
<comment type="tissue specificity">
    <text>Expressed by the venom gland.</text>
</comment>
<comment type="domain">
    <text evidence="3">The presence of a 'disulfide through disulfide knot' structurally defines this protein as a knottin.</text>
</comment>
<comment type="similarity">
    <text evidence="3">Belongs to the neurotoxin 03 (Tx2) family. 02 subfamily.</text>
</comment>
<name>TX32E_CHIGU</name>
<proteinExistence type="evidence at protein level"/>
<keyword id="KW-0903">Direct protein sequencing</keyword>
<keyword id="KW-1015">Disulfide bond</keyword>
<keyword id="KW-0872">Ion channel impairing toxin</keyword>
<keyword id="KW-0960">Knottin</keyword>
<keyword id="KW-0964">Secreted</keyword>
<keyword id="KW-0732">Signal</keyword>
<keyword id="KW-0800">Toxin</keyword>
<feature type="signal peptide" evidence="1">
    <location>
        <begin position="1"/>
        <end position="19"/>
    </location>
</feature>
<feature type="propeptide" id="PRO_0000398548" evidence="2">
    <location>
        <begin position="20"/>
        <end position="43"/>
    </location>
</feature>
<feature type="peptide" id="PRO_0000398549" description="U32-theraphotoxin-Cg1a">
    <location>
        <begin position="44"/>
        <end position="110"/>
    </location>
</feature>
<feature type="disulfide bond" evidence="3">
    <location>
        <begin position="49"/>
        <end position="63"/>
    </location>
</feature>
<feature type="disulfide bond" evidence="3">
    <location>
        <begin position="56"/>
        <end position="69"/>
    </location>
</feature>
<feature type="disulfide bond" evidence="3">
    <location>
        <begin position="60"/>
        <end position="105"/>
    </location>
</feature>
<feature type="disulfide bond" evidence="3">
    <location>
        <begin position="62"/>
        <end position="80"/>
    </location>
</feature>
<protein>
    <recommendedName>
        <fullName>U32-theraphotoxin-Cg1a</fullName>
        <shortName>U32-TRTX-Cg1a</shortName>
    </recommendedName>
    <alternativeName>
        <fullName>Jingzhaotoxin-66.2</fullName>
        <shortName>JZTX-66.2</shortName>
    </alternativeName>
    <alternativeName>
        <fullName>Peptide F8-12.07</fullName>
    </alternativeName>
</protein>
<dbReference type="EMBL" id="EU233917">
    <property type="protein sequence ID" value="ABY71736.1"/>
    <property type="molecule type" value="mRNA"/>
</dbReference>
<dbReference type="ArachnoServer" id="AS000864">
    <property type="toxin name" value="U32-theraphotoxin-Cg1a"/>
</dbReference>
<dbReference type="GO" id="GO:0005576">
    <property type="term" value="C:extracellular region"/>
    <property type="evidence" value="ECO:0007669"/>
    <property type="project" value="UniProtKB-SubCell"/>
</dbReference>
<dbReference type="GO" id="GO:0099106">
    <property type="term" value="F:ion channel regulator activity"/>
    <property type="evidence" value="ECO:0007669"/>
    <property type="project" value="UniProtKB-KW"/>
</dbReference>
<dbReference type="GO" id="GO:0090729">
    <property type="term" value="F:toxin activity"/>
    <property type="evidence" value="ECO:0007669"/>
    <property type="project" value="UniProtKB-KW"/>
</dbReference>
<evidence type="ECO:0000255" key="1"/>
<evidence type="ECO:0000269" key="2">
    <source>
    </source>
</evidence>
<evidence type="ECO:0000305" key="3"/>
<organism>
    <name type="scientific">Chilobrachys guangxiensis</name>
    <name type="common">Chinese earth tiger tarantula</name>
    <name type="synonym">Chilobrachys jingzhao</name>
    <dbReference type="NCBI Taxonomy" id="278060"/>
    <lineage>
        <taxon>Eukaryota</taxon>
        <taxon>Metazoa</taxon>
        <taxon>Ecdysozoa</taxon>
        <taxon>Arthropoda</taxon>
        <taxon>Chelicerata</taxon>
        <taxon>Arachnida</taxon>
        <taxon>Araneae</taxon>
        <taxon>Mygalomorphae</taxon>
        <taxon>Theraphosidae</taxon>
        <taxon>Chilobrachys</taxon>
    </lineage>
</organism>
<sequence>MKHCFLILFTLIVFTVVWSLEENEEYPDEDEMIESFMDGYSYRGDDGTCILKGDHCHGTCDCCGWTTTCRKSKSAGGKICKSEGSSISAFNAIAKGVAAMKKAKCKHKSG</sequence>